<proteinExistence type="evidence at protein level"/>
<keyword id="KW-0002">3D-structure</keyword>
<keyword id="KW-1015">Disulfide bond</keyword>
<keyword id="KW-0325">Glycoprotein</keyword>
<keyword id="KW-0358">Heparin-binding</keyword>
<keyword id="KW-0393">Immunoglobulin domain</keyword>
<keyword id="KW-0472">Membrane</keyword>
<keyword id="KW-0654">Proteoglycan</keyword>
<keyword id="KW-1185">Reference proteome</keyword>
<keyword id="KW-0677">Repeat</keyword>
<keyword id="KW-0732">Signal</keyword>
<keyword id="KW-0812">Transmembrane</keyword>
<keyword id="KW-1133">Transmembrane helix</keyword>
<evidence type="ECO:0000255" key="1"/>
<evidence type="ECO:0000255" key="2">
    <source>
        <dbReference type="PROSITE-ProRule" id="PRU00114"/>
    </source>
</evidence>
<evidence type="ECO:0000255" key="3">
    <source>
        <dbReference type="PROSITE-ProRule" id="PRU00316"/>
    </source>
</evidence>
<evidence type="ECO:0000256" key="4">
    <source>
        <dbReference type="SAM" id="MobiDB-lite"/>
    </source>
</evidence>
<evidence type="ECO:0000269" key="5">
    <source>
    </source>
</evidence>
<evidence type="ECO:0000269" key="6">
    <source>
    </source>
</evidence>
<evidence type="ECO:0000269" key="7">
    <source>
    </source>
</evidence>
<evidence type="ECO:0000269" key="8">
    <source>
    </source>
</evidence>
<evidence type="ECO:0000303" key="9">
    <source>
    </source>
</evidence>
<evidence type="ECO:0000305" key="10"/>
<evidence type="ECO:0000312" key="11">
    <source>
        <dbReference type="EMBL" id="AAF52461.1"/>
    </source>
</evidence>
<evidence type="ECO:0000312" key="12">
    <source>
        <dbReference type="EMBL" id="AAM50119.1"/>
    </source>
</evidence>
<evidence type="ECO:0000312" key="13">
    <source>
        <dbReference type="EMBL" id="ABA86412.1"/>
    </source>
</evidence>
<evidence type="ECO:0000312" key="14">
    <source>
        <dbReference type="EMBL" id="ACN58579.1"/>
    </source>
</evidence>
<evidence type="ECO:0007829" key="15">
    <source>
        <dbReference type="PDB" id="2IBB"/>
    </source>
</evidence>
<evidence type="ECO:0007829" key="16">
    <source>
        <dbReference type="PDB" id="2IBG"/>
    </source>
</evidence>
<evidence type="ECO:0007829" key="17">
    <source>
        <dbReference type="PDB" id="2IC2"/>
    </source>
</evidence>
<protein>
    <recommendedName>
        <fullName evidence="9">Interference hedgehog</fullName>
    </recommendedName>
</protein>
<gene>
    <name type="primary">ihog</name>
    <name type="ORF">CG9211</name>
</gene>
<sequence length="886" mass="97846">MTLLTSSLLLFSLLTSRLEAIPVLEKSPAHPAHSAHPAHPAHPAHPAHPSPGVRILRAPESLVAPLGDEVVLECETSLQPERFEWSHRSSRSPGAGFKYLKTGTAKANVSQEAAISRLRVLVRPDTLGEYRCVGWFGPLVVTSTIARLELASTSLVDAQESESPLQWRVSAGNSVLWSCGQQVQSNPSASWSYYRNGVEIKPEFIGTNGNLFLSNVSSESSGSYSCQATNPASGERIQLPGSLQLQVTPEQRSESKSPHLLRGQPSSQEITIREGSSLLLLCPGVGSPPPTVVWSSPDVVGAVKNKRSKVFGHALEISNTRVNDAGTYICFQDNGVRPALEHYIKVHVEQPPQIVRPPWADLTNEGDRLKLECKATGVPTPEIYWLLNGHSSIDDSEAELSNNFLILHSVLKRHAGYVQCFARNRLGEHSAGTLLQVNPKQIQEPRESGGTHRPKPNQGSRQKQMYPPTPPNVTRLSDESVMLRWMVPRNDGLPIVIFKVQYRMVGKRKNWQTTNDNIPYGKPKWNSELGKSFTASVTDLKPQHTYRFRILAVYSNNDNKESNTSAKFYLQPGAALDPMPVPELLEIEEYSETAVVLHWSLASDADEHLITGYYAYYRPSSSAGEYFKATIEGAHARSFKIAPLETATMYEFKLQSFSAASASEFSALKQGRTQRPKTSTTEEPTLQMGDRDTTTPSHNETFNMSPMLTGTIGGGAVLILLLISTCFCVCRRRNSRSRGNNPNKPRMAELRDDFVPLGNCSPTKQRQRTRHIHITLNPLAQQQQQALEEKNDTDQDAPYYQRPSSYDYDPTLRRMSSSSLRRSQRTLERAGGSNGSNNGNNNNLNQSAEAGSIENPGKPGRVLMKRPRLSSRSENLSSGSLNSVGV</sequence>
<reference evidence="11" key="1">
    <citation type="journal article" date="2000" name="Science">
        <title>The genome sequence of Drosophila melanogaster.</title>
        <authorList>
            <person name="Adams M.D."/>
            <person name="Celniker S.E."/>
            <person name="Holt R.A."/>
            <person name="Evans C.A."/>
            <person name="Gocayne J.D."/>
            <person name="Amanatides P.G."/>
            <person name="Scherer S.E."/>
            <person name="Li P.W."/>
            <person name="Hoskins R.A."/>
            <person name="Galle R.F."/>
            <person name="George R.A."/>
            <person name="Lewis S.E."/>
            <person name="Richards S."/>
            <person name="Ashburner M."/>
            <person name="Henderson S.N."/>
            <person name="Sutton G.G."/>
            <person name="Wortman J.R."/>
            <person name="Yandell M.D."/>
            <person name="Zhang Q."/>
            <person name="Chen L.X."/>
            <person name="Brandon R.C."/>
            <person name="Rogers Y.-H.C."/>
            <person name="Blazej R.G."/>
            <person name="Champe M."/>
            <person name="Pfeiffer B.D."/>
            <person name="Wan K.H."/>
            <person name="Doyle C."/>
            <person name="Baxter E.G."/>
            <person name="Helt G."/>
            <person name="Nelson C.R."/>
            <person name="Miklos G.L.G."/>
            <person name="Abril J.F."/>
            <person name="Agbayani A."/>
            <person name="An H.-J."/>
            <person name="Andrews-Pfannkoch C."/>
            <person name="Baldwin D."/>
            <person name="Ballew R.M."/>
            <person name="Basu A."/>
            <person name="Baxendale J."/>
            <person name="Bayraktaroglu L."/>
            <person name="Beasley E.M."/>
            <person name="Beeson K.Y."/>
            <person name="Benos P.V."/>
            <person name="Berman B.P."/>
            <person name="Bhandari D."/>
            <person name="Bolshakov S."/>
            <person name="Borkova D."/>
            <person name="Botchan M.R."/>
            <person name="Bouck J."/>
            <person name="Brokstein P."/>
            <person name="Brottier P."/>
            <person name="Burtis K.C."/>
            <person name="Busam D.A."/>
            <person name="Butler H."/>
            <person name="Cadieu E."/>
            <person name="Center A."/>
            <person name="Chandra I."/>
            <person name="Cherry J.M."/>
            <person name="Cawley S."/>
            <person name="Dahlke C."/>
            <person name="Davenport L.B."/>
            <person name="Davies P."/>
            <person name="de Pablos B."/>
            <person name="Delcher A."/>
            <person name="Deng Z."/>
            <person name="Mays A.D."/>
            <person name="Dew I."/>
            <person name="Dietz S.M."/>
            <person name="Dodson K."/>
            <person name="Doup L.E."/>
            <person name="Downes M."/>
            <person name="Dugan-Rocha S."/>
            <person name="Dunkov B.C."/>
            <person name="Dunn P."/>
            <person name="Durbin K.J."/>
            <person name="Evangelista C.C."/>
            <person name="Ferraz C."/>
            <person name="Ferriera S."/>
            <person name="Fleischmann W."/>
            <person name="Fosler C."/>
            <person name="Gabrielian A.E."/>
            <person name="Garg N.S."/>
            <person name="Gelbart W.M."/>
            <person name="Glasser K."/>
            <person name="Glodek A."/>
            <person name="Gong F."/>
            <person name="Gorrell J.H."/>
            <person name="Gu Z."/>
            <person name="Guan P."/>
            <person name="Harris M."/>
            <person name="Harris N.L."/>
            <person name="Harvey D.A."/>
            <person name="Heiman T.J."/>
            <person name="Hernandez J.R."/>
            <person name="Houck J."/>
            <person name="Hostin D."/>
            <person name="Houston K.A."/>
            <person name="Howland T.J."/>
            <person name="Wei M.-H."/>
            <person name="Ibegwam C."/>
            <person name="Jalali M."/>
            <person name="Kalush F."/>
            <person name="Karpen G.H."/>
            <person name="Ke Z."/>
            <person name="Kennison J.A."/>
            <person name="Ketchum K.A."/>
            <person name="Kimmel B.E."/>
            <person name="Kodira C.D."/>
            <person name="Kraft C.L."/>
            <person name="Kravitz S."/>
            <person name="Kulp D."/>
            <person name="Lai Z."/>
            <person name="Lasko P."/>
            <person name="Lei Y."/>
            <person name="Levitsky A.A."/>
            <person name="Li J.H."/>
            <person name="Li Z."/>
            <person name="Liang Y."/>
            <person name="Lin X."/>
            <person name="Liu X."/>
            <person name="Mattei B."/>
            <person name="McIntosh T.C."/>
            <person name="McLeod M.P."/>
            <person name="McPherson D."/>
            <person name="Merkulov G."/>
            <person name="Milshina N.V."/>
            <person name="Mobarry C."/>
            <person name="Morris J."/>
            <person name="Moshrefi A."/>
            <person name="Mount S.M."/>
            <person name="Moy M."/>
            <person name="Murphy B."/>
            <person name="Murphy L."/>
            <person name="Muzny D.M."/>
            <person name="Nelson D.L."/>
            <person name="Nelson D.R."/>
            <person name="Nelson K.A."/>
            <person name="Nixon K."/>
            <person name="Nusskern D.R."/>
            <person name="Pacleb J.M."/>
            <person name="Palazzolo M."/>
            <person name="Pittman G.S."/>
            <person name="Pan S."/>
            <person name="Pollard J."/>
            <person name="Puri V."/>
            <person name="Reese M.G."/>
            <person name="Reinert K."/>
            <person name="Remington K."/>
            <person name="Saunders R.D.C."/>
            <person name="Scheeler F."/>
            <person name="Shen H."/>
            <person name="Shue B.C."/>
            <person name="Siden-Kiamos I."/>
            <person name="Simpson M."/>
            <person name="Skupski M.P."/>
            <person name="Smith T.J."/>
            <person name="Spier E."/>
            <person name="Spradling A.C."/>
            <person name="Stapleton M."/>
            <person name="Strong R."/>
            <person name="Sun E."/>
            <person name="Svirskas R."/>
            <person name="Tector C."/>
            <person name="Turner R."/>
            <person name="Venter E."/>
            <person name="Wang A.H."/>
            <person name="Wang X."/>
            <person name="Wang Z.-Y."/>
            <person name="Wassarman D.A."/>
            <person name="Weinstock G.M."/>
            <person name="Weissenbach J."/>
            <person name="Williams S.M."/>
            <person name="Woodage T."/>
            <person name="Worley K.C."/>
            <person name="Wu D."/>
            <person name="Yang S."/>
            <person name="Yao Q.A."/>
            <person name="Ye J."/>
            <person name="Yeh R.-F."/>
            <person name="Zaveri J.S."/>
            <person name="Zhan M."/>
            <person name="Zhang G."/>
            <person name="Zhao Q."/>
            <person name="Zheng L."/>
            <person name="Zheng X.H."/>
            <person name="Zhong F.N."/>
            <person name="Zhong W."/>
            <person name="Zhou X."/>
            <person name="Zhu S.C."/>
            <person name="Zhu X."/>
            <person name="Smith H.O."/>
            <person name="Gibbs R.A."/>
            <person name="Myers E.W."/>
            <person name="Rubin G.M."/>
            <person name="Venter J.C."/>
        </authorList>
    </citation>
    <scope>NUCLEOTIDE SEQUENCE [LARGE SCALE GENOMIC DNA]</scope>
    <source>
        <strain>Berkeley</strain>
    </source>
</reference>
<reference evidence="10 11" key="2">
    <citation type="journal article" date="2002" name="Genome Biol.">
        <title>Annotation of the Drosophila melanogaster euchromatic genome: a systematic review.</title>
        <authorList>
            <person name="Misra S."/>
            <person name="Crosby M.A."/>
            <person name="Mungall C.J."/>
            <person name="Matthews B.B."/>
            <person name="Campbell K.S."/>
            <person name="Hradecky P."/>
            <person name="Huang Y."/>
            <person name="Kaminker J.S."/>
            <person name="Millburn G.H."/>
            <person name="Prochnik S.E."/>
            <person name="Smith C.D."/>
            <person name="Tupy J.L."/>
            <person name="Whitfield E.J."/>
            <person name="Bayraktaroglu L."/>
            <person name="Berman B.P."/>
            <person name="Bettencourt B.R."/>
            <person name="Celniker S.E."/>
            <person name="de Grey A.D.N.J."/>
            <person name="Drysdale R.A."/>
            <person name="Harris N.L."/>
            <person name="Richter J."/>
            <person name="Russo S."/>
            <person name="Schroeder A.J."/>
            <person name="Shu S.Q."/>
            <person name="Stapleton M."/>
            <person name="Yamada C."/>
            <person name="Ashburner M."/>
            <person name="Gelbart W.M."/>
            <person name="Rubin G.M."/>
            <person name="Lewis S.E."/>
        </authorList>
    </citation>
    <scope>GENOME REANNOTATION</scope>
    <source>
        <strain>Berkeley</strain>
    </source>
</reference>
<reference evidence="12" key="3">
    <citation type="journal article" date="2002" name="Genome Biol.">
        <title>A Drosophila full-length cDNA resource.</title>
        <authorList>
            <person name="Stapleton M."/>
            <person name="Carlson J.W."/>
            <person name="Brokstein P."/>
            <person name="Yu C."/>
            <person name="Champe M."/>
            <person name="George R.A."/>
            <person name="Guarin H."/>
            <person name="Kronmiller B."/>
            <person name="Pacleb J.M."/>
            <person name="Park S."/>
            <person name="Wan K.H."/>
            <person name="Rubin G.M."/>
            <person name="Celniker S.E."/>
        </authorList>
    </citation>
    <scope>NUCLEOTIDE SEQUENCE [LARGE SCALE MRNA]</scope>
    <source>
        <strain evidence="12">Berkeley</strain>
        <tissue evidence="5">Head</tissue>
    </source>
</reference>
<reference evidence="10 13" key="4">
    <citation type="journal article" date="2005" name="Mol. Biol. Evol.">
        <title>Intragenic Hill-Robertson interference influences selection intensity on synonymous mutations in Drosophila.</title>
        <authorList>
            <person name="Comeron J.M."/>
            <person name="Guthrie T.B."/>
        </authorList>
    </citation>
    <scope>NUCLEOTIDE SEQUENCE [GENOMIC DNA] OF 8-880</scope>
    <source>
        <strain evidence="13">Ral1</strain>
    </source>
</reference>
<reference evidence="10 14" key="5">
    <citation type="submission" date="2009-03" db="EMBL/GenBank/DDBJ databases">
        <authorList>
            <person name="Carlson J.W."/>
            <person name="Booth B."/>
            <person name="Frise E."/>
            <person name="Park S."/>
            <person name="Wan K.H."/>
            <person name="Yu C."/>
            <person name="Celniker S.E."/>
        </authorList>
    </citation>
    <scope>NUCLEOTIDE SEQUENCE [LARGE SCALE MRNA] OF 21-711</scope>
    <source>
        <strain>Berkeley</strain>
    </source>
</reference>
<reference evidence="10" key="6">
    <citation type="journal article" date="2003" name="Science">
        <title>Identification of Hedgehog pathway components by RNAi in Drosophila cultured cells.</title>
        <authorList>
            <person name="Lum L."/>
            <person name="Yao S."/>
            <person name="Mozer B."/>
            <person name="Rovescalli A."/>
            <person name="Von Kessler D."/>
            <person name="Nirenberg M."/>
            <person name="Beachy P.A."/>
        </authorList>
    </citation>
    <scope>IDENTIFICATION</scope>
</reference>
<reference evidence="10" key="7">
    <citation type="journal article" date="2006" name="Cell">
        <title>The ihog cell-surface proteins bind Hedgehog and mediate pathway activation.</title>
        <authorList>
            <person name="Yao S."/>
            <person name="Lum L."/>
            <person name="Beachy P.A."/>
        </authorList>
    </citation>
    <scope>FUNCTION</scope>
    <scope>INTERACTION WITH HH</scope>
    <scope>SUBCELLULAR LOCATION</scope>
    <scope>DEVELOPMENTAL STAGE</scope>
    <scope>DOMAIN</scope>
    <scope>DISRUPTION PHENOTYPE</scope>
</reference>
<reference evidence="10" key="8">
    <citation type="journal article" date="2009" name="Nat. Biotechnol.">
        <title>Mass-spectrometric identification and relative quantification of N-linked cell surface glycoproteins.</title>
        <authorList>
            <person name="Wollscheid B."/>
            <person name="Bausch-Fluck D."/>
            <person name="Henderson C."/>
            <person name="O'Brien R."/>
            <person name="Bibel M."/>
            <person name="Schiess R."/>
            <person name="Aebersold R."/>
            <person name="Watts J.D."/>
        </authorList>
    </citation>
    <scope>GLYCOSYLATION [LARGE SCALE ANALYSIS] AT ASN-108</scope>
    <scope>IDENTIFICATION BY MASS SPECTROMETRY</scope>
</reference>
<reference evidence="10" key="9">
    <citation type="journal article" date="2006" name="Proc. Natl. Acad. Sci. U.S.A.">
        <title>Structure of a heparin-dependent complex of Hedgehog and Ihog.</title>
        <authorList>
            <person name="McLellan J.S."/>
            <person name="Yao S."/>
            <person name="Zheng X.H."/>
            <person name="Geisbrecht B.V."/>
            <person name="Ghirlando R."/>
            <person name="Beachy P.A."/>
            <person name="Leahy D.J."/>
        </authorList>
    </citation>
    <scope>X-RAY CRYSTALLOGRAPHY (1.30 ANGSTROMS) OF 466-677 IN A COMPLEX WITH HH</scope>
    <scope>SUBUNIT</scope>
    <scope>HEPARIN-BINDING</scope>
    <scope>MUTAGENESIS OF ARG-503; LYS-507; LYS-509 AND ARG-547</scope>
</reference>
<dbReference type="EMBL" id="AE014134">
    <property type="protein sequence ID" value="AAF52461.1"/>
    <property type="molecule type" value="Genomic_DNA"/>
</dbReference>
<dbReference type="EMBL" id="AY119465">
    <property type="protein sequence ID" value="AAM50119.1"/>
    <property type="molecule type" value="mRNA"/>
</dbReference>
<dbReference type="EMBL" id="DQ138806">
    <property type="protein sequence ID" value="ABA86412.1"/>
    <property type="molecule type" value="Genomic_DNA"/>
</dbReference>
<dbReference type="EMBL" id="BT071816">
    <property type="protein sequence ID" value="ACN58579.1"/>
    <property type="molecule type" value="mRNA"/>
</dbReference>
<dbReference type="RefSeq" id="NP_609085.1">
    <property type="nucleotide sequence ID" value="NM_135241.2"/>
</dbReference>
<dbReference type="PDB" id="2IBB">
    <property type="method" value="X-ray"/>
    <property type="resolution" value="2.40 A"/>
    <property type="chains" value="A=466-676"/>
</dbReference>
<dbReference type="PDB" id="2IBG">
    <property type="method" value="X-ray"/>
    <property type="resolution" value="2.20 A"/>
    <property type="chains" value="A/B/C/D=466-677"/>
</dbReference>
<dbReference type="PDB" id="2IC2">
    <property type="method" value="X-ray"/>
    <property type="resolution" value="1.30 A"/>
    <property type="chains" value="A/B=466-577"/>
</dbReference>
<dbReference type="PDBsum" id="2IBB"/>
<dbReference type="PDBsum" id="2IBG"/>
<dbReference type="PDBsum" id="2IC2"/>
<dbReference type="SMR" id="Q9VM64"/>
<dbReference type="BioGRID" id="60122">
    <property type="interactions" value="8"/>
</dbReference>
<dbReference type="DIP" id="DIP-35774N"/>
<dbReference type="FunCoup" id="Q9VM64">
    <property type="interactions" value="44"/>
</dbReference>
<dbReference type="IntAct" id="Q9VM64">
    <property type="interactions" value="4"/>
</dbReference>
<dbReference type="STRING" id="7227.FBpp0078993"/>
<dbReference type="GlyCosmos" id="Q9VM64">
    <property type="glycosylation" value="5 sites, No reported glycans"/>
</dbReference>
<dbReference type="GlyGen" id="Q9VM64">
    <property type="glycosylation" value="5 sites"/>
</dbReference>
<dbReference type="iPTMnet" id="Q9VM64"/>
<dbReference type="PaxDb" id="7227-FBpp0078993"/>
<dbReference type="DNASU" id="33972"/>
<dbReference type="EnsemblMetazoa" id="FBtr0079365">
    <property type="protein sequence ID" value="FBpp0078993"/>
    <property type="gene ID" value="FBgn0031872"/>
</dbReference>
<dbReference type="GeneID" id="33972"/>
<dbReference type="KEGG" id="dme:Dmel_CG9211"/>
<dbReference type="UCSC" id="CG9211-RA">
    <property type="organism name" value="d. melanogaster"/>
</dbReference>
<dbReference type="AGR" id="FB:FBgn0031872"/>
<dbReference type="CTD" id="33972"/>
<dbReference type="FlyBase" id="FBgn0031872">
    <property type="gene designation" value="ihog"/>
</dbReference>
<dbReference type="VEuPathDB" id="VectorBase:FBgn0031872"/>
<dbReference type="eggNOG" id="ENOG502QSGM">
    <property type="taxonomic scope" value="Eukaryota"/>
</dbReference>
<dbReference type="GeneTree" id="ENSGT00940000172763"/>
<dbReference type="HOGENOM" id="CLU_004633_1_0_1"/>
<dbReference type="InParanoid" id="Q9VM64"/>
<dbReference type="OMA" id="CGLMEGK"/>
<dbReference type="OrthoDB" id="9998697at2759"/>
<dbReference type="PhylomeDB" id="Q9VM64"/>
<dbReference type="Reactome" id="R-DME-209338">
    <property type="pathway name" value="Assembly of the 'signalling complexes'"/>
</dbReference>
<dbReference type="Reactome" id="R-DME-525793">
    <property type="pathway name" value="Myogenesis"/>
</dbReference>
<dbReference type="Reactome" id="R-DME-5632681">
    <property type="pathway name" value="Ligand-receptor interactions"/>
</dbReference>
<dbReference type="SignaLink" id="Q9VM64"/>
<dbReference type="BioGRID-ORCS" id="33972">
    <property type="hits" value="0 hits in 3 CRISPR screens"/>
</dbReference>
<dbReference type="EvolutionaryTrace" id="Q9VM64"/>
<dbReference type="GenomeRNAi" id="33972"/>
<dbReference type="PRO" id="PR:Q9VM64"/>
<dbReference type="Proteomes" id="UP000000803">
    <property type="component" value="Chromosome 2L"/>
</dbReference>
<dbReference type="Bgee" id="FBgn0031872">
    <property type="expression patterns" value="Expressed in eye disc (Drosophila) and 32 other cell types or tissues"/>
</dbReference>
<dbReference type="ExpressionAtlas" id="Q9VM64">
    <property type="expression patterns" value="baseline and differential"/>
</dbReference>
<dbReference type="GO" id="GO:0030424">
    <property type="term" value="C:axon"/>
    <property type="evidence" value="ECO:0000318"/>
    <property type="project" value="GO_Central"/>
</dbReference>
<dbReference type="GO" id="GO:0009986">
    <property type="term" value="C:cell surface"/>
    <property type="evidence" value="ECO:0000314"/>
    <property type="project" value="FlyBase"/>
</dbReference>
<dbReference type="GO" id="GO:0035230">
    <property type="term" value="C:cytoneme"/>
    <property type="evidence" value="ECO:0000314"/>
    <property type="project" value="FlyBase"/>
</dbReference>
<dbReference type="GO" id="GO:0016020">
    <property type="term" value="C:membrane"/>
    <property type="evidence" value="ECO:0000314"/>
    <property type="project" value="UniProtKB"/>
</dbReference>
<dbReference type="GO" id="GO:0005886">
    <property type="term" value="C:plasma membrane"/>
    <property type="evidence" value="ECO:0000314"/>
    <property type="project" value="FlyBase"/>
</dbReference>
<dbReference type="GO" id="GO:0015026">
    <property type="term" value="F:coreceptor activity"/>
    <property type="evidence" value="ECO:0000316"/>
    <property type="project" value="FlyBase"/>
</dbReference>
<dbReference type="GO" id="GO:0097108">
    <property type="term" value="F:hedgehog family protein binding"/>
    <property type="evidence" value="ECO:0000314"/>
    <property type="project" value="FlyBase"/>
</dbReference>
<dbReference type="GO" id="GO:0008201">
    <property type="term" value="F:heparin binding"/>
    <property type="evidence" value="ECO:0000314"/>
    <property type="project" value="UniProtKB"/>
</dbReference>
<dbReference type="GO" id="GO:0042802">
    <property type="term" value="F:identical protein binding"/>
    <property type="evidence" value="ECO:0000353"/>
    <property type="project" value="IntAct"/>
</dbReference>
<dbReference type="GO" id="GO:0005113">
    <property type="term" value="F:patched binding"/>
    <property type="evidence" value="ECO:0000353"/>
    <property type="project" value="FlyBase"/>
</dbReference>
<dbReference type="GO" id="GO:0042803">
    <property type="term" value="F:protein homodimerization activity"/>
    <property type="evidence" value="ECO:0000314"/>
    <property type="project" value="UniProtKB"/>
</dbReference>
<dbReference type="GO" id="GO:0007411">
    <property type="term" value="P:axon guidance"/>
    <property type="evidence" value="ECO:0000318"/>
    <property type="project" value="GO_Central"/>
</dbReference>
<dbReference type="GO" id="GO:0098609">
    <property type="term" value="P:cell-cell adhesion"/>
    <property type="evidence" value="ECO:0000318"/>
    <property type="project" value="GO_Central"/>
</dbReference>
<dbReference type="GO" id="GO:0048749">
    <property type="term" value="P:compound eye development"/>
    <property type="evidence" value="ECO:0000316"/>
    <property type="project" value="FlyBase"/>
</dbReference>
<dbReference type="GO" id="GO:0035017">
    <property type="term" value="P:cuticle pattern formation"/>
    <property type="evidence" value="ECO:0000315"/>
    <property type="project" value="FlyBase"/>
</dbReference>
<dbReference type="GO" id="GO:0034109">
    <property type="term" value="P:homotypic cell-cell adhesion"/>
    <property type="evidence" value="ECO:0000314"/>
    <property type="project" value="FlyBase"/>
</dbReference>
<dbReference type="GO" id="GO:0071694">
    <property type="term" value="P:maintenance of protein location in extracellular region"/>
    <property type="evidence" value="ECO:0000316"/>
    <property type="project" value="FlyBase"/>
</dbReference>
<dbReference type="GO" id="GO:0007379">
    <property type="term" value="P:segment specification"/>
    <property type="evidence" value="ECO:0000315"/>
    <property type="project" value="FlyBase"/>
</dbReference>
<dbReference type="GO" id="GO:0007224">
    <property type="term" value="P:smoothened signaling pathway"/>
    <property type="evidence" value="ECO:0000314"/>
    <property type="project" value="FlyBase"/>
</dbReference>
<dbReference type="GO" id="GO:0048100">
    <property type="term" value="P:wing disc anterior/posterior pattern formation"/>
    <property type="evidence" value="ECO:0000316"/>
    <property type="project" value="FlyBase"/>
</dbReference>
<dbReference type="GO" id="GO:0035222">
    <property type="term" value="P:wing disc pattern formation"/>
    <property type="evidence" value="ECO:0000315"/>
    <property type="project" value="FlyBase"/>
</dbReference>
<dbReference type="CDD" id="cd00063">
    <property type="entry name" value="FN3"/>
    <property type="match status" value="2"/>
</dbReference>
<dbReference type="FunFam" id="2.60.40.10:FF:001723">
    <property type="entry name" value="Interference hedgehog"/>
    <property type="match status" value="1"/>
</dbReference>
<dbReference type="FunFam" id="2.60.40.10:FF:001747">
    <property type="entry name" value="Interference hedgehog"/>
    <property type="match status" value="1"/>
</dbReference>
<dbReference type="FunFam" id="2.60.40.10:FF:001773">
    <property type="entry name" value="Interference hedgehog"/>
    <property type="match status" value="1"/>
</dbReference>
<dbReference type="FunFam" id="2.60.40.10:FF:002071">
    <property type="entry name" value="Interference hedgehog"/>
    <property type="match status" value="1"/>
</dbReference>
<dbReference type="FunFam" id="2.60.40.10:FF:002212">
    <property type="entry name" value="Interference hedgehog"/>
    <property type="match status" value="1"/>
</dbReference>
<dbReference type="Gene3D" id="2.60.40.10">
    <property type="entry name" value="Immunoglobulins"/>
    <property type="match status" value="5"/>
</dbReference>
<dbReference type="InterPro" id="IPR003961">
    <property type="entry name" value="FN3_dom"/>
</dbReference>
<dbReference type="InterPro" id="IPR036116">
    <property type="entry name" value="FN3_sf"/>
</dbReference>
<dbReference type="InterPro" id="IPR007110">
    <property type="entry name" value="Ig-like_dom"/>
</dbReference>
<dbReference type="InterPro" id="IPR036179">
    <property type="entry name" value="Ig-like_dom_sf"/>
</dbReference>
<dbReference type="InterPro" id="IPR013783">
    <property type="entry name" value="Ig-like_fold"/>
</dbReference>
<dbReference type="InterPro" id="IPR003599">
    <property type="entry name" value="Ig_sub"/>
</dbReference>
<dbReference type="InterPro" id="IPR003598">
    <property type="entry name" value="Ig_sub2"/>
</dbReference>
<dbReference type="PANTHER" id="PTHR44170:SF33">
    <property type="entry name" value="BROTHER OF IHOG, ISOFORM G-RELATED"/>
    <property type="match status" value="1"/>
</dbReference>
<dbReference type="PANTHER" id="PTHR44170">
    <property type="entry name" value="PROTEIN SIDEKICK"/>
    <property type="match status" value="1"/>
</dbReference>
<dbReference type="Pfam" id="PF00041">
    <property type="entry name" value="fn3"/>
    <property type="match status" value="2"/>
</dbReference>
<dbReference type="Pfam" id="PF13895">
    <property type="entry name" value="Ig_2"/>
    <property type="match status" value="1"/>
</dbReference>
<dbReference type="Pfam" id="PF13927">
    <property type="entry name" value="Ig_3"/>
    <property type="match status" value="2"/>
</dbReference>
<dbReference type="SMART" id="SM00060">
    <property type="entry name" value="FN3"/>
    <property type="match status" value="2"/>
</dbReference>
<dbReference type="SMART" id="SM00409">
    <property type="entry name" value="IG"/>
    <property type="match status" value="4"/>
</dbReference>
<dbReference type="SMART" id="SM00408">
    <property type="entry name" value="IGc2"/>
    <property type="match status" value="3"/>
</dbReference>
<dbReference type="SUPFAM" id="SSF49265">
    <property type="entry name" value="Fibronectin type III"/>
    <property type="match status" value="1"/>
</dbReference>
<dbReference type="SUPFAM" id="SSF48726">
    <property type="entry name" value="Immunoglobulin"/>
    <property type="match status" value="3"/>
</dbReference>
<dbReference type="PROSITE" id="PS50853">
    <property type="entry name" value="FN3"/>
    <property type="match status" value="2"/>
</dbReference>
<dbReference type="PROSITE" id="PS50835">
    <property type="entry name" value="IG_LIKE"/>
    <property type="match status" value="4"/>
</dbReference>
<accession>Q9VM64</accession>
<accession>C0PTX1</accession>
<accession>Q2XY56</accession>
<name>IHOG_DROME</name>
<feature type="signal peptide" evidence="1">
    <location>
        <begin position="1"/>
        <end position="20"/>
    </location>
</feature>
<feature type="chain" id="PRO_0000383615" description="Interference hedgehog" evidence="1">
    <location>
        <begin position="21"/>
        <end position="886"/>
    </location>
</feature>
<feature type="topological domain" description="Extracellular" evidence="1">
    <location>
        <begin position="21"/>
        <end position="709"/>
    </location>
</feature>
<feature type="transmembrane region" description="Helical" evidence="1">
    <location>
        <begin position="710"/>
        <end position="730"/>
    </location>
</feature>
<feature type="topological domain" description="Cytoplasmic" evidence="1">
    <location>
        <begin position="731"/>
        <end position="886"/>
    </location>
</feature>
<feature type="domain" description="Ig-like C2-type 1" evidence="1">
    <location>
        <begin position="51"/>
        <end position="148"/>
    </location>
</feature>
<feature type="domain" description="Ig-like C2-type 2" evidence="1">
    <location>
        <begin position="138"/>
        <end position="238"/>
    </location>
</feature>
<feature type="domain" description="Ig-like C2-type 3" evidence="1">
    <location>
        <begin position="258"/>
        <end position="346"/>
    </location>
</feature>
<feature type="domain" description="Ig-like C2-type 4" evidence="1">
    <location>
        <begin position="352"/>
        <end position="438"/>
    </location>
</feature>
<feature type="domain" description="Fibronectin type-III 1" evidence="3">
    <location>
        <begin position="467"/>
        <end position="573"/>
    </location>
</feature>
<feature type="domain" description="Fibronectin type-III 2" evidence="3">
    <location>
        <begin position="581"/>
        <end position="676"/>
    </location>
</feature>
<feature type="region of interest" description="Disordered" evidence="4">
    <location>
        <begin position="29"/>
        <end position="52"/>
    </location>
</feature>
<feature type="region of interest" description="Disordered" evidence="4">
    <location>
        <begin position="432"/>
        <end position="475"/>
    </location>
</feature>
<feature type="region of interest" description="Disordered" evidence="4">
    <location>
        <begin position="668"/>
        <end position="697"/>
    </location>
</feature>
<feature type="region of interest" description="Disordered" evidence="4">
    <location>
        <begin position="734"/>
        <end position="768"/>
    </location>
</feature>
<feature type="region of interest" description="Disordered" evidence="4">
    <location>
        <begin position="781"/>
        <end position="886"/>
    </location>
</feature>
<feature type="compositionally biased region" description="Low complexity" evidence="4">
    <location>
        <begin position="29"/>
        <end position="38"/>
    </location>
</feature>
<feature type="compositionally biased region" description="Polar residues" evidence="4">
    <location>
        <begin position="671"/>
        <end position="684"/>
    </location>
</feature>
<feature type="compositionally biased region" description="Low complexity" evidence="4">
    <location>
        <begin position="829"/>
        <end position="843"/>
    </location>
</feature>
<feature type="compositionally biased region" description="Low complexity" evidence="4">
    <location>
        <begin position="870"/>
        <end position="886"/>
    </location>
</feature>
<feature type="binding site" evidence="7">
    <location>
        <position position="503"/>
    </location>
    <ligand>
        <name>heparin</name>
        <dbReference type="ChEBI" id="CHEBI:28304"/>
    </ligand>
</feature>
<feature type="binding site" evidence="7">
    <location>
        <position position="507"/>
    </location>
    <ligand>
        <name>heparin</name>
        <dbReference type="ChEBI" id="CHEBI:28304"/>
    </ligand>
</feature>
<feature type="binding site" evidence="7">
    <location>
        <position position="509"/>
    </location>
    <ligand>
        <name>heparin</name>
        <dbReference type="ChEBI" id="CHEBI:28304"/>
    </ligand>
</feature>
<feature type="binding site" evidence="7">
    <location>
        <position position="547"/>
    </location>
    <ligand>
        <name>heparin</name>
        <dbReference type="ChEBI" id="CHEBI:28304"/>
    </ligand>
</feature>
<feature type="glycosylation site" description="N-linked (GlcNAc...) asparagine" evidence="8">
    <location>
        <position position="108"/>
    </location>
</feature>
<feature type="glycosylation site" description="N-linked (GlcNAc...) asparagine" evidence="1">
    <location>
        <position position="215"/>
    </location>
</feature>
<feature type="glycosylation site" description="N-linked (GlcNAc...) asparagine" evidence="1">
    <location>
        <position position="472"/>
    </location>
</feature>
<feature type="glycosylation site" description="N-linked (GlcNAc...) asparagine" evidence="1">
    <location>
        <position position="563"/>
    </location>
</feature>
<feature type="glycosylation site" description="N-linked (GlcNAc...) asparagine" evidence="1">
    <location>
        <position position="699"/>
    </location>
</feature>
<feature type="disulfide bond" evidence="2">
    <location>
        <begin position="74"/>
        <end position="132"/>
    </location>
</feature>
<feature type="disulfide bond" evidence="2">
    <location>
        <begin position="179"/>
        <end position="226"/>
    </location>
</feature>
<feature type="disulfide bond" evidence="2">
    <location>
        <begin position="282"/>
        <end position="330"/>
    </location>
</feature>
<feature type="disulfide bond" evidence="2">
    <location>
        <begin position="373"/>
        <end position="420"/>
    </location>
</feature>
<feature type="mutagenesis site" description="Loss of Heparin binding." evidence="7">
    <original>R</original>
    <variation>E</variation>
    <location>
        <position position="503"/>
    </location>
</feature>
<feature type="mutagenesis site" description="Loss of Heparin binding." evidence="7">
    <original>K</original>
    <variation>E</variation>
    <location>
        <position position="507"/>
    </location>
</feature>
<feature type="mutagenesis site" description="Loss of Heparin binding." evidence="7">
    <original>K</original>
    <variation>E</variation>
    <location>
        <position position="509"/>
    </location>
</feature>
<feature type="mutagenesis site" description="Loss of Heparin binding." evidence="7">
    <original>R</original>
    <variation>E</variation>
    <location>
        <position position="547"/>
    </location>
</feature>
<feature type="sequence conflict" description="In Ref. 4; ABA86412." evidence="10" ref="4">
    <location>
        <begin position="47"/>
        <end position="49"/>
    </location>
</feature>
<feature type="sequence conflict" description="In Ref. 4; ABA86412." evidence="10" ref="4">
    <original>S</original>
    <variation>L</variation>
    <location>
        <position position="242"/>
    </location>
</feature>
<feature type="sequence conflict" description="In Ref. 4; ABA86412." evidence="10" ref="4">
    <original>E</original>
    <variation>D</variation>
    <location>
        <position position="250"/>
    </location>
</feature>
<feature type="sequence conflict" description="In Ref. 4; ABA86412." evidence="10" ref="4">
    <original>E</original>
    <variation>Q</variation>
    <location>
        <position position="254"/>
    </location>
</feature>
<feature type="sequence conflict" description="In Ref. 4; ABA86412." evidence="10" ref="4">
    <original>N</original>
    <variation>H</variation>
    <location>
        <position position="323"/>
    </location>
</feature>
<feature type="sequence conflict" description="In Ref. 4; ABA86412." evidence="10" ref="4">
    <original>K</original>
    <variation>E</variation>
    <location>
        <position position="374"/>
    </location>
</feature>
<feature type="strand" evidence="17">
    <location>
        <begin position="472"/>
        <end position="475"/>
    </location>
</feature>
<feature type="strand" evidence="15">
    <location>
        <begin position="477"/>
        <end position="479"/>
    </location>
</feature>
<feature type="strand" evidence="17">
    <location>
        <begin position="481"/>
        <end position="488"/>
    </location>
</feature>
<feature type="strand" evidence="17">
    <location>
        <begin position="495"/>
        <end position="504"/>
    </location>
</feature>
<feature type="strand" evidence="17">
    <location>
        <begin position="512"/>
        <end position="519"/>
    </location>
</feature>
<feature type="strand" evidence="16">
    <location>
        <begin position="522"/>
        <end position="524"/>
    </location>
</feature>
<feature type="strand" evidence="17">
    <location>
        <begin position="526"/>
        <end position="537"/>
    </location>
</feature>
<feature type="strand" evidence="17">
    <location>
        <begin position="542"/>
        <end position="554"/>
    </location>
</feature>
<feature type="strand" evidence="17">
    <location>
        <begin position="559"/>
        <end position="561"/>
    </location>
</feature>
<feature type="strand" evidence="17">
    <location>
        <begin position="568"/>
        <end position="570"/>
    </location>
</feature>
<feature type="strand" evidence="15">
    <location>
        <begin position="573"/>
        <end position="575"/>
    </location>
</feature>
<feature type="strand" evidence="16">
    <location>
        <begin position="591"/>
        <end position="593"/>
    </location>
</feature>
<feature type="strand" evidence="16">
    <location>
        <begin position="595"/>
        <end position="600"/>
    </location>
</feature>
<feature type="helix" evidence="16">
    <location>
        <begin position="607"/>
        <end position="609"/>
    </location>
</feature>
<feature type="strand" evidence="16">
    <location>
        <begin position="612"/>
        <end position="619"/>
    </location>
</feature>
<feature type="strand" evidence="16">
    <location>
        <begin position="627"/>
        <end position="632"/>
    </location>
</feature>
<feature type="strand" evidence="16">
    <location>
        <begin position="638"/>
        <end position="641"/>
    </location>
</feature>
<feature type="strand" evidence="16">
    <location>
        <begin position="649"/>
        <end position="657"/>
    </location>
</feature>
<feature type="strand" evidence="16">
    <location>
        <begin position="669"/>
        <end position="672"/>
    </location>
</feature>
<organism>
    <name type="scientific">Drosophila melanogaster</name>
    <name type="common">Fruit fly</name>
    <dbReference type="NCBI Taxonomy" id="7227"/>
    <lineage>
        <taxon>Eukaryota</taxon>
        <taxon>Metazoa</taxon>
        <taxon>Ecdysozoa</taxon>
        <taxon>Arthropoda</taxon>
        <taxon>Hexapoda</taxon>
        <taxon>Insecta</taxon>
        <taxon>Pterygota</taxon>
        <taxon>Neoptera</taxon>
        <taxon>Endopterygota</taxon>
        <taxon>Diptera</taxon>
        <taxon>Brachycera</taxon>
        <taxon>Muscomorpha</taxon>
        <taxon>Ephydroidea</taxon>
        <taxon>Drosophilidae</taxon>
        <taxon>Drosophila</taxon>
        <taxon>Sophophora</taxon>
    </lineage>
</organism>
<comment type="function">
    <text evidence="6">Mediates response to the active Hedgehog (Hh) protein signal in embryos, functioning upstream or at the level of patched (ptc).</text>
</comment>
<comment type="subunit">
    <text evidence="6 7">Homodimer. Heterotetramer; 2 iHog chains bind 2 hh chains when facilitated by heparin, heparin is required to promote high-affinity interactions between hh and iHog.</text>
</comment>
<comment type="interaction">
    <interactant intactId="EBI-94134">
        <id>Q9VM64</id>
    </interactant>
    <interactant intactId="EBI-15609026">
        <id>Q02936-1</id>
        <label>hh</label>
    </interactant>
    <organismsDiffer>false</organismsDiffer>
    <experiments>6</experiments>
</comment>
<comment type="interaction">
    <interactant intactId="EBI-94134">
        <id>Q9VM64</id>
    </interactant>
    <interactant intactId="EBI-94134">
        <id>Q9VM64</id>
        <label>ihog</label>
    </interactant>
    <organismsDiffer>false</organismsDiffer>
    <experiments>3</experiments>
</comment>
<comment type="interaction">
    <interactant intactId="EBI-94134">
        <id>Q9VM64</id>
    </interactant>
    <interactant intactId="EBI-869384">
        <id>Q94918</id>
        <label>vn</label>
    </interactant>
    <organismsDiffer>false</organismsDiffer>
    <experiments>2</experiments>
</comment>
<comment type="subcellular location">
    <subcellularLocation>
        <location evidence="1">Membrane</location>
        <topology evidence="1 6">Single-pass type I membrane protein</topology>
    </subcellularLocation>
</comment>
<comment type="developmental stage">
    <text evidence="6">Expressed both maternally and zygotically.</text>
</comment>
<comment type="domain">
    <text evidence="6">The first Fibronectin type-III domain mediates a specific interaction with Hh protein, in vitro. The second Fibronectin type-III domain is additionally required for in vivo signaling activity.</text>
</comment>
<comment type="disruption phenotype">
    <text evidence="6">Patterning defects characteristic of Hh signaling loss in embryos and imaginal disks.</text>
</comment>
<comment type="similarity">
    <text evidence="1">Belongs to the immunoglobulin superfamily. IHOG family.</text>
</comment>